<proteinExistence type="inferred from homology"/>
<organism>
    <name type="scientific">Aspergillus oryzae (strain ATCC 42149 / RIB 40)</name>
    <name type="common">Yellow koji mold</name>
    <dbReference type="NCBI Taxonomy" id="510516"/>
    <lineage>
        <taxon>Eukaryota</taxon>
        <taxon>Fungi</taxon>
        <taxon>Dikarya</taxon>
        <taxon>Ascomycota</taxon>
        <taxon>Pezizomycotina</taxon>
        <taxon>Eurotiomycetes</taxon>
        <taxon>Eurotiomycetidae</taxon>
        <taxon>Eurotiales</taxon>
        <taxon>Aspergillaceae</taxon>
        <taxon>Aspergillus</taxon>
        <taxon>Aspergillus subgen. Circumdati</taxon>
    </lineage>
</organism>
<sequence>MNIPGMTTGMAPAGATAGAGFPGAGAGMQGMSEQEQAMVKAMHAAMESCPVKTVISGTMGFGLGGVFGLFMASMSYDSTFTPQGKAIMDLPWREQVRRGFKDMGSRSWSSAKNFGIVGALYSGTECCVEGLRAKNDLSNSVISGCITGGILGAKAGPQAAAAGCAGFAAFSAAIDAYMRMPSEE</sequence>
<feature type="chain" id="PRO_0000228087" description="Mitochondrial import inner membrane translocase subunit tim22">
    <location>
        <begin position="1"/>
        <end position="184"/>
    </location>
</feature>
<feature type="transmembrane region" description="Helical" evidence="3">
    <location>
        <begin position="8"/>
        <end position="28"/>
    </location>
</feature>
<feature type="transmembrane region" description="Helical" evidence="3">
    <location>
        <begin position="54"/>
        <end position="74"/>
    </location>
</feature>
<feature type="transmembrane region" description="Helical" evidence="3">
    <location>
        <begin position="150"/>
        <end position="170"/>
    </location>
</feature>
<feature type="disulfide bond" evidence="1">
    <location>
        <begin position="49"/>
        <end position="126"/>
    </location>
</feature>
<feature type="disulfide bond" evidence="1">
    <location>
        <begin position="145"/>
        <end position="164"/>
    </location>
</feature>
<comment type="function">
    <text evidence="2">Essential core component of the TIM22 complex, a complex that mediates the import and insertion of multi-pass transmembrane proteins into the mitochondrial inner membrane. In the TIM22 complex, it constitutes the voltage-activated and signal-gated channel. Forms a twin-pore translocase that uses the membrane potential as external driving force in 2 voltage-dependent steps (By similarity).</text>
</comment>
<comment type="subunit">
    <text evidence="2">Component of the TIM22 complex, whose core is composed of TIM22 and TIM54, associated with the 70 kDa heterohexamer composed of TIM9 and TIM10 (or TIM8 and TIM13).</text>
</comment>
<comment type="subcellular location">
    <subcellularLocation>
        <location evidence="2">Mitochondrion inner membrane</location>
        <topology evidence="3">Multi-pass membrane protein</topology>
    </subcellularLocation>
</comment>
<comment type="similarity">
    <text evidence="4">Belongs to the Tim17/Tim22/Tim23 family.</text>
</comment>
<evidence type="ECO:0000250" key="1">
    <source>
        <dbReference type="UniProtKB" id="A0A1D8PI78"/>
    </source>
</evidence>
<evidence type="ECO:0000250" key="2">
    <source>
        <dbReference type="UniProtKB" id="Q12328"/>
    </source>
</evidence>
<evidence type="ECO:0000255" key="3"/>
<evidence type="ECO:0000305" key="4"/>
<dbReference type="EMBL" id="BA000052">
    <property type="protein sequence ID" value="BAE61367.1"/>
    <property type="molecule type" value="Genomic_DNA"/>
</dbReference>
<dbReference type="RefSeq" id="XP_001822500.1">
    <property type="nucleotide sequence ID" value="XM_001822448.2"/>
</dbReference>
<dbReference type="SMR" id="Q2UAP8"/>
<dbReference type="STRING" id="510516.Q2UAP8"/>
<dbReference type="EnsemblFungi" id="BAE61367">
    <property type="protein sequence ID" value="BAE61367"/>
    <property type="gene ID" value="AO090102000295"/>
</dbReference>
<dbReference type="GeneID" id="5994545"/>
<dbReference type="KEGG" id="aor:AO090102000295"/>
<dbReference type="VEuPathDB" id="FungiDB:AO090102000295"/>
<dbReference type="HOGENOM" id="CLU_091077_1_0_1"/>
<dbReference type="OMA" id="VNPNMAD"/>
<dbReference type="OrthoDB" id="122245at5052"/>
<dbReference type="Proteomes" id="UP000006564">
    <property type="component" value="Chromosome 4"/>
</dbReference>
<dbReference type="GO" id="GO:0042721">
    <property type="term" value="C:TIM22 mitochondrial import inner membrane insertion complex"/>
    <property type="evidence" value="ECO:0007669"/>
    <property type="project" value="EnsemblFungi"/>
</dbReference>
<dbReference type="GO" id="GO:0030943">
    <property type="term" value="F:mitochondrion targeting sequence binding"/>
    <property type="evidence" value="ECO:0007669"/>
    <property type="project" value="EnsemblFungi"/>
</dbReference>
<dbReference type="GO" id="GO:0008320">
    <property type="term" value="F:protein transmembrane transporter activity"/>
    <property type="evidence" value="ECO:0007669"/>
    <property type="project" value="EnsemblFungi"/>
</dbReference>
<dbReference type="GO" id="GO:0005198">
    <property type="term" value="F:structural molecule activity"/>
    <property type="evidence" value="ECO:0007669"/>
    <property type="project" value="EnsemblFungi"/>
</dbReference>
<dbReference type="GO" id="GO:0045039">
    <property type="term" value="P:protein insertion into mitochondrial inner membrane"/>
    <property type="evidence" value="ECO:0007669"/>
    <property type="project" value="EnsemblFungi"/>
</dbReference>
<dbReference type="InterPro" id="IPR039175">
    <property type="entry name" value="TIM22"/>
</dbReference>
<dbReference type="PANTHER" id="PTHR14110">
    <property type="entry name" value="MITOCHONDRIAL IMPORT INNER MEMBRANE TRANSLOCASE SUBUNIT TIM22"/>
    <property type="match status" value="1"/>
</dbReference>
<dbReference type="PANTHER" id="PTHR14110:SF0">
    <property type="entry name" value="MITOCHONDRIAL IMPORT INNER MEMBRANE TRANSLOCASE SUBUNIT TIM22"/>
    <property type="match status" value="1"/>
</dbReference>
<dbReference type="Pfam" id="PF02466">
    <property type="entry name" value="Tim17"/>
    <property type="match status" value="1"/>
</dbReference>
<accession>Q2UAP8</accession>
<reference key="1">
    <citation type="journal article" date="2005" name="Nature">
        <title>Genome sequencing and analysis of Aspergillus oryzae.</title>
        <authorList>
            <person name="Machida M."/>
            <person name="Asai K."/>
            <person name="Sano M."/>
            <person name="Tanaka T."/>
            <person name="Kumagai T."/>
            <person name="Terai G."/>
            <person name="Kusumoto K."/>
            <person name="Arima T."/>
            <person name="Akita O."/>
            <person name="Kashiwagi Y."/>
            <person name="Abe K."/>
            <person name="Gomi K."/>
            <person name="Horiuchi H."/>
            <person name="Kitamoto K."/>
            <person name="Kobayashi T."/>
            <person name="Takeuchi M."/>
            <person name="Denning D.W."/>
            <person name="Galagan J.E."/>
            <person name="Nierman W.C."/>
            <person name="Yu J."/>
            <person name="Archer D.B."/>
            <person name="Bennett J.W."/>
            <person name="Bhatnagar D."/>
            <person name="Cleveland T.E."/>
            <person name="Fedorova N.D."/>
            <person name="Gotoh O."/>
            <person name="Horikawa H."/>
            <person name="Hosoyama A."/>
            <person name="Ichinomiya M."/>
            <person name="Igarashi R."/>
            <person name="Iwashita K."/>
            <person name="Juvvadi P.R."/>
            <person name="Kato M."/>
            <person name="Kato Y."/>
            <person name="Kin T."/>
            <person name="Kokubun A."/>
            <person name="Maeda H."/>
            <person name="Maeyama N."/>
            <person name="Maruyama J."/>
            <person name="Nagasaki H."/>
            <person name="Nakajima T."/>
            <person name="Oda K."/>
            <person name="Okada K."/>
            <person name="Paulsen I."/>
            <person name="Sakamoto K."/>
            <person name="Sawano T."/>
            <person name="Takahashi M."/>
            <person name="Takase K."/>
            <person name="Terabayashi Y."/>
            <person name="Wortman J.R."/>
            <person name="Yamada O."/>
            <person name="Yamagata Y."/>
            <person name="Anazawa H."/>
            <person name="Hata Y."/>
            <person name="Koide Y."/>
            <person name="Komori T."/>
            <person name="Koyama Y."/>
            <person name="Minetoki T."/>
            <person name="Suharnan S."/>
            <person name="Tanaka A."/>
            <person name="Isono K."/>
            <person name="Kuhara S."/>
            <person name="Ogasawara N."/>
            <person name="Kikuchi H."/>
        </authorList>
    </citation>
    <scope>NUCLEOTIDE SEQUENCE [LARGE SCALE GENOMIC DNA]</scope>
    <source>
        <strain>ATCC 42149 / RIB 40</strain>
    </source>
</reference>
<name>TIM22_ASPOR</name>
<protein>
    <recommendedName>
        <fullName>Mitochondrial import inner membrane translocase subunit tim22</fullName>
    </recommendedName>
</protein>
<gene>
    <name type="primary">tim22</name>
    <name type="ORF">AO090102000295</name>
</gene>
<keyword id="KW-1015">Disulfide bond</keyword>
<keyword id="KW-0472">Membrane</keyword>
<keyword id="KW-0496">Mitochondrion</keyword>
<keyword id="KW-0999">Mitochondrion inner membrane</keyword>
<keyword id="KW-0653">Protein transport</keyword>
<keyword id="KW-1185">Reference proteome</keyword>
<keyword id="KW-0811">Translocation</keyword>
<keyword id="KW-0812">Transmembrane</keyword>
<keyword id="KW-1133">Transmembrane helix</keyword>
<keyword id="KW-0813">Transport</keyword>